<keyword id="KW-0687">Ribonucleoprotein</keyword>
<keyword id="KW-0689">Ribosomal protein</keyword>
<keyword id="KW-0694">RNA-binding</keyword>
<keyword id="KW-0699">rRNA-binding</keyword>
<proteinExistence type="inferred from homology"/>
<feature type="chain" id="PRO_1000141505" description="Large ribosomal subunit protein uL2">
    <location>
        <begin position="1"/>
        <end position="276"/>
    </location>
</feature>
<feature type="region of interest" description="Disordered" evidence="2">
    <location>
        <begin position="1"/>
        <end position="20"/>
    </location>
</feature>
<feature type="region of interest" description="Disordered" evidence="2">
    <location>
        <begin position="219"/>
        <end position="276"/>
    </location>
</feature>
<feature type="compositionally biased region" description="Polar residues" evidence="2">
    <location>
        <begin position="7"/>
        <end position="20"/>
    </location>
</feature>
<dbReference type="EMBL" id="CP001176">
    <property type="protein sequence ID" value="ACK60789.1"/>
    <property type="molecule type" value="Genomic_DNA"/>
</dbReference>
<dbReference type="RefSeq" id="WP_000511583.1">
    <property type="nucleotide sequence ID" value="NZ_VEHB01000017.1"/>
</dbReference>
<dbReference type="SMR" id="B7HJ51"/>
<dbReference type="GeneID" id="72446931"/>
<dbReference type="KEGG" id="bcb:BCB4264_A0134"/>
<dbReference type="HOGENOM" id="CLU_036235_2_1_9"/>
<dbReference type="Proteomes" id="UP000007096">
    <property type="component" value="Chromosome"/>
</dbReference>
<dbReference type="GO" id="GO:0015934">
    <property type="term" value="C:large ribosomal subunit"/>
    <property type="evidence" value="ECO:0007669"/>
    <property type="project" value="InterPro"/>
</dbReference>
<dbReference type="GO" id="GO:0019843">
    <property type="term" value="F:rRNA binding"/>
    <property type="evidence" value="ECO:0007669"/>
    <property type="project" value="UniProtKB-UniRule"/>
</dbReference>
<dbReference type="GO" id="GO:0003735">
    <property type="term" value="F:structural constituent of ribosome"/>
    <property type="evidence" value="ECO:0007669"/>
    <property type="project" value="InterPro"/>
</dbReference>
<dbReference type="GO" id="GO:0016740">
    <property type="term" value="F:transferase activity"/>
    <property type="evidence" value="ECO:0007669"/>
    <property type="project" value="InterPro"/>
</dbReference>
<dbReference type="GO" id="GO:0002181">
    <property type="term" value="P:cytoplasmic translation"/>
    <property type="evidence" value="ECO:0007669"/>
    <property type="project" value="TreeGrafter"/>
</dbReference>
<dbReference type="FunFam" id="2.30.30.30:FF:000001">
    <property type="entry name" value="50S ribosomal protein L2"/>
    <property type="match status" value="1"/>
</dbReference>
<dbReference type="FunFam" id="2.40.50.140:FF:000003">
    <property type="entry name" value="50S ribosomal protein L2"/>
    <property type="match status" value="1"/>
</dbReference>
<dbReference type="FunFam" id="4.10.950.10:FF:000001">
    <property type="entry name" value="50S ribosomal protein L2"/>
    <property type="match status" value="1"/>
</dbReference>
<dbReference type="Gene3D" id="2.30.30.30">
    <property type="match status" value="1"/>
</dbReference>
<dbReference type="Gene3D" id="2.40.50.140">
    <property type="entry name" value="Nucleic acid-binding proteins"/>
    <property type="match status" value="1"/>
</dbReference>
<dbReference type="Gene3D" id="4.10.950.10">
    <property type="entry name" value="Ribosomal protein L2, domain 3"/>
    <property type="match status" value="1"/>
</dbReference>
<dbReference type="HAMAP" id="MF_01320_B">
    <property type="entry name" value="Ribosomal_uL2_B"/>
    <property type="match status" value="1"/>
</dbReference>
<dbReference type="InterPro" id="IPR012340">
    <property type="entry name" value="NA-bd_OB-fold"/>
</dbReference>
<dbReference type="InterPro" id="IPR014722">
    <property type="entry name" value="Rib_uL2_dom2"/>
</dbReference>
<dbReference type="InterPro" id="IPR002171">
    <property type="entry name" value="Ribosomal_uL2"/>
</dbReference>
<dbReference type="InterPro" id="IPR005880">
    <property type="entry name" value="Ribosomal_uL2_bac/org-type"/>
</dbReference>
<dbReference type="InterPro" id="IPR022669">
    <property type="entry name" value="Ribosomal_uL2_C"/>
</dbReference>
<dbReference type="InterPro" id="IPR022671">
    <property type="entry name" value="Ribosomal_uL2_CS"/>
</dbReference>
<dbReference type="InterPro" id="IPR014726">
    <property type="entry name" value="Ribosomal_uL2_dom3"/>
</dbReference>
<dbReference type="InterPro" id="IPR022666">
    <property type="entry name" value="Ribosomal_uL2_RNA-bd_dom"/>
</dbReference>
<dbReference type="InterPro" id="IPR008991">
    <property type="entry name" value="Translation_prot_SH3-like_sf"/>
</dbReference>
<dbReference type="NCBIfam" id="TIGR01171">
    <property type="entry name" value="rplB_bact"/>
    <property type="match status" value="1"/>
</dbReference>
<dbReference type="PANTHER" id="PTHR13691:SF5">
    <property type="entry name" value="LARGE RIBOSOMAL SUBUNIT PROTEIN UL2M"/>
    <property type="match status" value="1"/>
</dbReference>
<dbReference type="PANTHER" id="PTHR13691">
    <property type="entry name" value="RIBOSOMAL PROTEIN L2"/>
    <property type="match status" value="1"/>
</dbReference>
<dbReference type="Pfam" id="PF00181">
    <property type="entry name" value="Ribosomal_L2"/>
    <property type="match status" value="1"/>
</dbReference>
<dbReference type="Pfam" id="PF03947">
    <property type="entry name" value="Ribosomal_L2_C"/>
    <property type="match status" value="1"/>
</dbReference>
<dbReference type="PIRSF" id="PIRSF002158">
    <property type="entry name" value="Ribosomal_L2"/>
    <property type="match status" value="1"/>
</dbReference>
<dbReference type="SMART" id="SM01383">
    <property type="entry name" value="Ribosomal_L2"/>
    <property type="match status" value="1"/>
</dbReference>
<dbReference type="SMART" id="SM01382">
    <property type="entry name" value="Ribosomal_L2_C"/>
    <property type="match status" value="1"/>
</dbReference>
<dbReference type="SUPFAM" id="SSF50249">
    <property type="entry name" value="Nucleic acid-binding proteins"/>
    <property type="match status" value="1"/>
</dbReference>
<dbReference type="SUPFAM" id="SSF50104">
    <property type="entry name" value="Translation proteins SH3-like domain"/>
    <property type="match status" value="1"/>
</dbReference>
<dbReference type="PROSITE" id="PS00467">
    <property type="entry name" value="RIBOSOMAL_L2"/>
    <property type="match status" value="1"/>
</dbReference>
<organism>
    <name type="scientific">Bacillus cereus (strain B4264)</name>
    <dbReference type="NCBI Taxonomy" id="405532"/>
    <lineage>
        <taxon>Bacteria</taxon>
        <taxon>Bacillati</taxon>
        <taxon>Bacillota</taxon>
        <taxon>Bacilli</taxon>
        <taxon>Bacillales</taxon>
        <taxon>Bacillaceae</taxon>
        <taxon>Bacillus</taxon>
        <taxon>Bacillus cereus group</taxon>
    </lineage>
</organism>
<gene>
    <name evidence="1" type="primary">rplB</name>
    <name type="ordered locus">BCB4264_A0134</name>
</gene>
<accession>B7HJ51</accession>
<comment type="function">
    <text evidence="1">One of the primary rRNA binding proteins. Required for association of the 30S and 50S subunits to form the 70S ribosome, for tRNA binding and peptide bond formation. It has been suggested to have peptidyltransferase activity; this is somewhat controversial. Makes several contacts with the 16S rRNA in the 70S ribosome.</text>
</comment>
<comment type="subunit">
    <text evidence="1">Part of the 50S ribosomal subunit. Forms a bridge to the 30S subunit in the 70S ribosome.</text>
</comment>
<comment type="similarity">
    <text evidence="1">Belongs to the universal ribosomal protein uL2 family.</text>
</comment>
<protein>
    <recommendedName>
        <fullName evidence="1">Large ribosomal subunit protein uL2</fullName>
    </recommendedName>
    <alternativeName>
        <fullName evidence="3">50S ribosomal protein L2</fullName>
    </alternativeName>
</protein>
<name>RL2_BACC4</name>
<reference key="1">
    <citation type="submission" date="2008-10" db="EMBL/GenBank/DDBJ databases">
        <title>Genome sequence of Bacillus cereus B4264.</title>
        <authorList>
            <person name="Dodson R.J."/>
            <person name="Durkin A.S."/>
            <person name="Rosovitz M.J."/>
            <person name="Rasko D.A."/>
            <person name="Hoffmaster A."/>
            <person name="Ravel J."/>
            <person name="Sutton G."/>
        </authorList>
    </citation>
    <scope>NUCLEOTIDE SEQUENCE [LARGE SCALE GENOMIC DNA]</scope>
    <source>
        <strain>B4264</strain>
    </source>
</reference>
<sequence length="276" mass="30279">MGIKKYNPTTNGRRNMTTNDFAEITTDRPEKSLLAPLSKKAGRNNQGKITVRHQGGGHKRQYRIIDFKRNKDGIPGRVATIEYDPNRSANIALINYVDGEKRYILAPKSLEVGMEVMSGPEADIKIGNALPLINIPVGTVVHNIELKPGRGGQLVRSAGTSAQVLGKEGKYVLVRLTSGEVRLVLSACRASIGQVGNEQHELIKIGKAGRSRWLGKRPTVRGSVMNPVDHPHGGGEGRSPIGRKSPMSPWGKPTLGFKTRKKNKASDKFIVRRRKK</sequence>
<evidence type="ECO:0000255" key="1">
    <source>
        <dbReference type="HAMAP-Rule" id="MF_01320"/>
    </source>
</evidence>
<evidence type="ECO:0000256" key="2">
    <source>
        <dbReference type="SAM" id="MobiDB-lite"/>
    </source>
</evidence>
<evidence type="ECO:0000305" key="3"/>